<gene>
    <name type="primary">ACP2</name>
    <name type="synonym">A1</name>
    <name type="synonym">ACL1.2</name>
    <name type="ordered locus">At1g54580</name>
    <name type="ORF">T22H22.3</name>
</gene>
<organism>
    <name type="scientific">Arabidopsis thaliana</name>
    <name type="common">Mouse-ear cress</name>
    <dbReference type="NCBI Taxonomy" id="3702"/>
    <lineage>
        <taxon>Eukaryota</taxon>
        <taxon>Viridiplantae</taxon>
        <taxon>Streptophyta</taxon>
        <taxon>Embryophyta</taxon>
        <taxon>Tracheophyta</taxon>
        <taxon>Spermatophyta</taxon>
        <taxon>Magnoliopsida</taxon>
        <taxon>eudicotyledons</taxon>
        <taxon>Gunneridae</taxon>
        <taxon>Pentapetalae</taxon>
        <taxon>rosids</taxon>
        <taxon>malvids</taxon>
        <taxon>Brassicales</taxon>
        <taxon>Brassicaceae</taxon>
        <taxon>Camelineae</taxon>
        <taxon>Arabidopsis</taxon>
    </lineage>
</organism>
<reference key="1">
    <citation type="journal article" date="1991" name="Plant Mol. Biol.">
        <title>Analysis of two linked genes coding for the acyl carrier protein (ACP) from Arabidopsis thaliana (columbia).</title>
        <authorList>
            <person name="Lamppa G."/>
            <person name="Jacks C."/>
        </authorList>
    </citation>
    <scope>NUCLEOTIDE SEQUENCE [GENOMIC DNA]</scope>
    <source>
        <strain>cv. Columbia</strain>
    </source>
</reference>
<reference key="2">
    <citation type="journal article" date="2000" name="Nature">
        <title>Sequence and analysis of chromosome 1 of the plant Arabidopsis thaliana.</title>
        <authorList>
            <person name="Theologis A."/>
            <person name="Ecker J.R."/>
            <person name="Palm C.J."/>
            <person name="Federspiel N.A."/>
            <person name="Kaul S."/>
            <person name="White O."/>
            <person name="Alonso J."/>
            <person name="Altafi H."/>
            <person name="Araujo R."/>
            <person name="Bowman C.L."/>
            <person name="Brooks S.Y."/>
            <person name="Buehler E."/>
            <person name="Chan A."/>
            <person name="Chao Q."/>
            <person name="Chen H."/>
            <person name="Cheuk R.F."/>
            <person name="Chin C.W."/>
            <person name="Chung M.K."/>
            <person name="Conn L."/>
            <person name="Conway A.B."/>
            <person name="Conway A.R."/>
            <person name="Creasy T.H."/>
            <person name="Dewar K."/>
            <person name="Dunn P."/>
            <person name="Etgu P."/>
            <person name="Feldblyum T.V."/>
            <person name="Feng J.-D."/>
            <person name="Fong B."/>
            <person name="Fujii C.Y."/>
            <person name="Gill J.E."/>
            <person name="Goldsmith A.D."/>
            <person name="Haas B."/>
            <person name="Hansen N.F."/>
            <person name="Hughes B."/>
            <person name="Huizar L."/>
            <person name="Hunter J.L."/>
            <person name="Jenkins J."/>
            <person name="Johnson-Hopson C."/>
            <person name="Khan S."/>
            <person name="Khaykin E."/>
            <person name="Kim C.J."/>
            <person name="Koo H.L."/>
            <person name="Kremenetskaia I."/>
            <person name="Kurtz D.B."/>
            <person name="Kwan A."/>
            <person name="Lam B."/>
            <person name="Langin-Hooper S."/>
            <person name="Lee A."/>
            <person name="Lee J.M."/>
            <person name="Lenz C.A."/>
            <person name="Li J.H."/>
            <person name="Li Y.-P."/>
            <person name="Lin X."/>
            <person name="Liu S.X."/>
            <person name="Liu Z.A."/>
            <person name="Luros J.S."/>
            <person name="Maiti R."/>
            <person name="Marziali A."/>
            <person name="Militscher J."/>
            <person name="Miranda M."/>
            <person name="Nguyen M."/>
            <person name="Nierman W.C."/>
            <person name="Osborne B.I."/>
            <person name="Pai G."/>
            <person name="Peterson J."/>
            <person name="Pham P.K."/>
            <person name="Rizzo M."/>
            <person name="Rooney T."/>
            <person name="Rowley D."/>
            <person name="Sakano H."/>
            <person name="Salzberg S.L."/>
            <person name="Schwartz J.R."/>
            <person name="Shinn P."/>
            <person name="Southwick A.M."/>
            <person name="Sun H."/>
            <person name="Tallon L.J."/>
            <person name="Tambunga G."/>
            <person name="Toriumi M.J."/>
            <person name="Town C.D."/>
            <person name="Utterback T."/>
            <person name="Van Aken S."/>
            <person name="Vaysberg M."/>
            <person name="Vysotskaia V.S."/>
            <person name="Walker M."/>
            <person name="Wu D."/>
            <person name="Yu G."/>
            <person name="Fraser C.M."/>
            <person name="Venter J.C."/>
            <person name="Davis R.W."/>
        </authorList>
    </citation>
    <scope>NUCLEOTIDE SEQUENCE [LARGE SCALE GENOMIC DNA]</scope>
    <source>
        <strain>cv. Columbia</strain>
    </source>
</reference>
<reference key="3">
    <citation type="journal article" date="2017" name="Plant J.">
        <title>Araport11: a complete reannotation of the Arabidopsis thaliana reference genome.</title>
        <authorList>
            <person name="Cheng C.Y."/>
            <person name="Krishnakumar V."/>
            <person name="Chan A.P."/>
            <person name="Thibaud-Nissen F."/>
            <person name="Schobel S."/>
            <person name="Town C.D."/>
        </authorList>
    </citation>
    <scope>GENOME REANNOTATION</scope>
    <source>
        <strain>cv. Columbia</strain>
    </source>
</reference>
<reference key="4">
    <citation type="journal article" date="2003" name="Science">
        <title>Empirical analysis of transcriptional activity in the Arabidopsis genome.</title>
        <authorList>
            <person name="Yamada K."/>
            <person name="Lim J."/>
            <person name="Dale J.M."/>
            <person name="Chen H."/>
            <person name="Shinn P."/>
            <person name="Palm C.J."/>
            <person name="Southwick A.M."/>
            <person name="Wu H.C."/>
            <person name="Kim C.J."/>
            <person name="Nguyen M."/>
            <person name="Pham P.K."/>
            <person name="Cheuk R.F."/>
            <person name="Karlin-Newmann G."/>
            <person name="Liu S.X."/>
            <person name="Lam B."/>
            <person name="Sakano H."/>
            <person name="Wu T."/>
            <person name="Yu G."/>
            <person name="Miranda M."/>
            <person name="Quach H.L."/>
            <person name="Tripp M."/>
            <person name="Chang C.H."/>
            <person name="Lee J.M."/>
            <person name="Toriumi M.J."/>
            <person name="Chan M.M."/>
            <person name="Tang C.C."/>
            <person name="Onodera C.S."/>
            <person name="Deng J.M."/>
            <person name="Akiyama K."/>
            <person name="Ansari Y."/>
            <person name="Arakawa T."/>
            <person name="Banh J."/>
            <person name="Banno F."/>
            <person name="Bowser L."/>
            <person name="Brooks S.Y."/>
            <person name="Carninci P."/>
            <person name="Chao Q."/>
            <person name="Choy N."/>
            <person name="Enju A."/>
            <person name="Goldsmith A.D."/>
            <person name="Gurjal M."/>
            <person name="Hansen N.F."/>
            <person name="Hayashizaki Y."/>
            <person name="Johnson-Hopson C."/>
            <person name="Hsuan V.W."/>
            <person name="Iida K."/>
            <person name="Karnes M."/>
            <person name="Khan S."/>
            <person name="Koesema E."/>
            <person name="Ishida J."/>
            <person name="Jiang P.X."/>
            <person name="Jones T."/>
            <person name="Kawai J."/>
            <person name="Kamiya A."/>
            <person name="Meyers C."/>
            <person name="Nakajima M."/>
            <person name="Narusaka M."/>
            <person name="Seki M."/>
            <person name="Sakurai T."/>
            <person name="Satou M."/>
            <person name="Tamse R."/>
            <person name="Vaysberg M."/>
            <person name="Wallender E.K."/>
            <person name="Wong C."/>
            <person name="Yamamura Y."/>
            <person name="Yuan S."/>
            <person name="Shinozaki K."/>
            <person name="Davis R.W."/>
            <person name="Theologis A."/>
            <person name="Ecker J.R."/>
        </authorList>
    </citation>
    <scope>NUCLEOTIDE SEQUENCE [LARGE SCALE MRNA]</scope>
    <source>
        <strain>cv. Columbia</strain>
    </source>
</reference>
<reference key="5">
    <citation type="journal article" date="1992" name="Plant Physiol.">
        <title>Expression of constitutive and tissue-specific acyl carrier protein isoforms in Arabidopsis.</title>
        <authorList>
            <person name="Hlousek-Radojcic A."/>
            <person name="Post-Beittenmiller D."/>
            <person name="Ohlrogge J.B."/>
        </authorList>
    </citation>
    <scope>CHARACTERIZATION</scope>
</reference>
<reference key="6">
    <citation type="journal article" date="2002" name="Plant Physiol.">
        <title>Differential regulation of mRNA levels of acyl carrier protein isoforms in Arabidopsis.</title>
        <authorList>
            <person name="Bonaventure G."/>
            <person name="Ohlrogge J.B."/>
        </authorList>
    </citation>
    <scope>INDUCTION</scope>
</reference>
<name>ACP2_ARATH</name>
<proteinExistence type="evidence at protein level"/>
<dbReference type="EMBL" id="X57698">
    <property type="protein sequence ID" value="CAB63798.1"/>
    <property type="status" value="ALT_SEQ"/>
    <property type="molecule type" value="Genomic_DNA"/>
</dbReference>
<dbReference type="EMBL" id="AC005388">
    <property type="protein sequence ID" value="AAC64875.1"/>
    <property type="molecule type" value="Genomic_DNA"/>
</dbReference>
<dbReference type="EMBL" id="CP002684">
    <property type="protein sequence ID" value="AEE33121.1"/>
    <property type="molecule type" value="Genomic_DNA"/>
</dbReference>
<dbReference type="EMBL" id="AY062773">
    <property type="protein sequence ID" value="AAL32851.1"/>
    <property type="molecule type" value="mRNA"/>
</dbReference>
<dbReference type="EMBL" id="AY081661">
    <property type="protein sequence ID" value="AAM10223.1"/>
    <property type="molecule type" value="mRNA"/>
</dbReference>
<dbReference type="PIR" id="H96587">
    <property type="entry name" value="H96587"/>
</dbReference>
<dbReference type="PIR" id="S14964">
    <property type="entry name" value="S14964"/>
</dbReference>
<dbReference type="RefSeq" id="NP_175860.1">
    <property type="nucleotide sequence ID" value="NM_104336.5"/>
</dbReference>
<dbReference type="SMR" id="P25701"/>
<dbReference type="BioGRID" id="27125">
    <property type="interactions" value="1"/>
</dbReference>
<dbReference type="FunCoup" id="P25701">
    <property type="interactions" value="1285"/>
</dbReference>
<dbReference type="STRING" id="3702.P25701"/>
<dbReference type="iPTMnet" id="P25701"/>
<dbReference type="PaxDb" id="3702-AT1G54580.1"/>
<dbReference type="ProteomicsDB" id="244394"/>
<dbReference type="EnsemblPlants" id="AT1G54580.1">
    <property type="protein sequence ID" value="AT1G54580.1"/>
    <property type="gene ID" value="AT1G54580"/>
</dbReference>
<dbReference type="GeneID" id="841900"/>
<dbReference type="Gramene" id="AT1G54580.1">
    <property type="protein sequence ID" value="AT1G54580.1"/>
    <property type="gene ID" value="AT1G54580"/>
</dbReference>
<dbReference type="KEGG" id="ath:AT1G54580"/>
<dbReference type="Araport" id="AT1G54580"/>
<dbReference type="TAIR" id="AT1G54580">
    <property type="gene designation" value="ACP2"/>
</dbReference>
<dbReference type="eggNOG" id="KOG1748">
    <property type="taxonomic scope" value="Eukaryota"/>
</dbReference>
<dbReference type="HOGENOM" id="CLU_108696_1_0_1"/>
<dbReference type="InParanoid" id="P25701"/>
<dbReference type="OMA" id="VCGASKF"/>
<dbReference type="PhylomeDB" id="P25701"/>
<dbReference type="CD-CODE" id="4299E36E">
    <property type="entry name" value="Nucleolus"/>
</dbReference>
<dbReference type="PRO" id="PR:P25701"/>
<dbReference type="Proteomes" id="UP000006548">
    <property type="component" value="Chromosome 1"/>
</dbReference>
<dbReference type="ExpressionAtlas" id="P25701">
    <property type="expression patterns" value="baseline and differential"/>
</dbReference>
<dbReference type="GO" id="GO:0009507">
    <property type="term" value="C:chloroplast"/>
    <property type="evidence" value="ECO:0007005"/>
    <property type="project" value="TAIR"/>
</dbReference>
<dbReference type="GO" id="GO:0000036">
    <property type="term" value="F:acyl carrier activity"/>
    <property type="evidence" value="ECO:0000314"/>
    <property type="project" value="TAIR"/>
</dbReference>
<dbReference type="GO" id="GO:0031177">
    <property type="term" value="F:phosphopantetheine binding"/>
    <property type="evidence" value="ECO:0007669"/>
    <property type="project" value="InterPro"/>
</dbReference>
<dbReference type="GO" id="GO:0019904">
    <property type="term" value="F:protein domain specific binding"/>
    <property type="evidence" value="ECO:0000353"/>
    <property type="project" value="CAFA"/>
</dbReference>
<dbReference type="Gene3D" id="1.10.1200.10">
    <property type="entry name" value="ACP-like"/>
    <property type="match status" value="1"/>
</dbReference>
<dbReference type="HAMAP" id="MF_01217">
    <property type="entry name" value="Acyl_carrier"/>
    <property type="match status" value="1"/>
</dbReference>
<dbReference type="InterPro" id="IPR003231">
    <property type="entry name" value="ACP"/>
</dbReference>
<dbReference type="InterPro" id="IPR036736">
    <property type="entry name" value="ACP-like_sf"/>
</dbReference>
<dbReference type="InterPro" id="IPR044813">
    <property type="entry name" value="ACP_chloroplastic"/>
</dbReference>
<dbReference type="InterPro" id="IPR020806">
    <property type="entry name" value="PKS_PP-bd"/>
</dbReference>
<dbReference type="InterPro" id="IPR009081">
    <property type="entry name" value="PP-bd_ACP"/>
</dbReference>
<dbReference type="InterPro" id="IPR006162">
    <property type="entry name" value="Ppantetheine_attach_site"/>
</dbReference>
<dbReference type="NCBIfam" id="TIGR00517">
    <property type="entry name" value="acyl_carrier"/>
    <property type="match status" value="1"/>
</dbReference>
<dbReference type="PANTHER" id="PTHR46153">
    <property type="entry name" value="ACYL CARRIER PROTEIN"/>
    <property type="match status" value="1"/>
</dbReference>
<dbReference type="PANTHER" id="PTHR46153:SF20">
    <property type="entry name" value="ACYL CARRIER PROTEIN 2, CHLOROPLASTIC-RELATED"/>
    <property type="match status" value="1"/>
</dbReference>
<dbReference type="Pfam" id="PF00550">
    <property type="entry name" value="PP-binding"/>
    <property type="match status" value="1"/>
</dbReference>
<dbReference type="SMART" id="SM00823">
    <property type="entry name" value="PKS_PP"/>
    <property type="match status" value="1"/>
</dbReference>
<dbReference type="SUPFAM" id="SSF47336">
    <property type="entry name" value="ACP-like"/>
    <property type="match status" value="1"/>
</dbReference>
<dbReference type="PROSITE" id="PS50075">
    <property type="entry name" value="CARRIER"/>
    <property type="match status" value="1"/>
</dbReference>
<dbReference type="PROSITE" id="PS00012">
    <property type="entry name" value="PHOSPHOPANTETHEINE"/>
    <property type="match status" value="1"/>
</dbReference>
<sequence length="136" mass="14528">MASIAASASISLQARPRQLAIAASQVKSFSNGRRSSLSFNLRQLPTRLTVSCAAKPETVDKVCAVVRKQLSLKEADEITAATKFAALGADSLDTVEIVMGLEEEFGIEMAEEKAQSIATVEQAAALIEELLFEKAK</sequence>
<protein>
    <recommendedName>
        <fullName>Acyl carrier protein 2, chloroplastic</fullName>
        <shortName>ACP-2</shortName>
    </recommendedName>
</protein>
<accession>P25701</accession>
<accession>Q9ZVN1</accession>
<comment type="function">
    <text>Carrier of the growing fatty acid chain in fatty acid biosynthesis.</text>
</comment>
<comment type="subcellular location">
    <subcellularLocation>
        <location>Plastid</location>
        <location>Chloroplast</location>
    </subcellularLocation>
</comment>
<comment type="induction">
    <text evidence="4">By sucrose in the dark. Down-regulated by starvation.</text>
</comment>
<comment type="PTM">
    <text evidence="1">4'-phosphopantetheine is transferred from CoA to a specific serine of apo-ACP by acpS. This modification is essential for activity because fatty acids are bound in thioester linkage to the sulfhydryl of the prosthetic group (By similarity).</text>
</comment>
<comment type="similarity">
    <text evidence="5">Belongs to the acyl carrier protein (ACP) family.</text>
</comment>
<comment type="sequence caution" evidence="5">
    <conflict type="erroneous gene model prediction">
        <sequence resource="EMBL-CDS" id="CAB63798"/>
    </conflict>
</comment>
<evidence type="ECO:0000250" key="1"/>
<evidence type="ECO:0000255" key="2"/>
<evidence type="ECO:0000255" key="3">
    <source>
        <dbReference type="PROSITE-ProRule" id="PRU00258"/>
    </source>
</evidence>
<evidence type="ECO:0000269" key="4">
    <source>
    </source>
</evidence>
<evidence type="ECO:0000305" key="5"/>
<feature type="transit peptide" description="Chloroplast" evidence="2">
    <location>
        <begin position="1"/>
        <end position="51"/>
    </location>
</feature>
<feature type="chain" id="PRO_0000000569" description="Acyl carrier protein 2, chloroplastic">
    <location>
        <begin position="52"/>
        <end position="136"/>
    </location>
</feature>
<feature type="domain" description="Carrier" evidence="3">
    <location>
        <begin position="56"/>
        <end position="131"/>
    </location>
</feature>
<feature type="modified residue" description="O-(pantetheine 4'-phosphoryl)serine" evidence="3">
    <location>
        <position position="91"/>
    </location>
</feature>
<keyword id="KW-0150">Chloroplast</keyword>
<keyword id="KW-0275">Fatty acid biosynthesis</keyword>
<keyword id="KW-0276">Fatty acid metabolism</keyword>
<keyword id="KW-0444">Lipid biosynthesis</keyword>
<keyword id="KW-0443">Lipid metabolism</keyword>
<keyword id="KW-0596">Phosphopantetheine</keyword>
<keyword id="KW-0597">Phosphoprotein</keyword>
<keyword id="KW-0934">Plastid</keyword>
<keyword id="KW-1185">Reference proteome</keyword>
<keyword id="KW-0809">Transit peptide</keyword>